<accession>P49303</accession>
<accession>Q65094</accession>
<comment type="function">
    <molecule>Leader protease</molecule>
    <text evidence="4 6">Autocatalytically cleaves itself from the polyprotein at the L/VP0 junction. Also cleaves the host translation initiation factors EIF4G1 and EIF4G3, in order to shut off the capped cellular mRNA transcription. Plays a role in counteracting host innate antiviral response using diverse mechanisms. Possesses a deubiquitinase activity acting on both 'Lys-48' and 'Lys-63'-linked polyubiquitin chains. In turn, inhibits the ubiquitination and subsequent activation of key signaling molecules of type I IFN response such as host RIGI, TBK1, TRAF3 and TRAF6. Inhibits host NF-kappa-B activity by inducing a decrease in RELA mRNA levels. Cleaves a peptide bond in the C-terminus of host ISG15, resulting in the damaging of this modifier that can no longer be attached to target proteins. Also cleaves host G3BP1 and G3BP2 in order to inhibit cytoplasmic stress granules assembly.</text>
</comment>
<comment type="function">
    <molecule>Capsid protein VP4</molecule>
    <text evidence="3">Lies on the inner surface of the capsid shell. After binding to the host receptor, the capsid undergoes conformational changes. Capsid protein VP4 is released, capsid protein VP1 N-terminus is externalized, and together, they shape a pore in the host membrane through which the viral genome is translocated into the host cell cytoplasm. After genome has been released, the channel shrinks.</text>
</comment>
<comment type="function">
    <molecule>Capsid protein VP2</molecule>
    <text evidence="4 5">Forms an icosahedral capsid of pseudo T=3 symmetry with capsid proteins VP1 and VP3. The capsid is composed of 60 copies of each capsid protein organized in the form of twelve pentamers and encloses the viral positive strand RNA genome (By similarity). Upon acidifcation in the endosome, dissociates into pentamers (By similarity).</text>
</comment>
<comment type="function">
    <molecule>Capsid protein VP3</molecule>
    <text evidence="4 5">Forms an icosahedral capsid of pseudo T=3 symmetry with capsid proteins VP0 and VP3. The capsid is composed of 60 copies of each capsid protein organized in the form of twelve pentamers and encloses the viral positive strand RNA genome (By similarity). Upon acidifcation in the endosome, dissociates into pentamers (By similarity).</text>
</comment>
<comment type="function">
    <molecule>Capsid protein VP1</molecule>
    <text evidence="4 5">Forms an icosahedral capsid of pseudo T=3 symmetry with capsid proteins VP2 and VP3. The capsid is composed of 60 copies of each capsid protein organized in the form of twelve pentamers and encloses the viral positive strand RNA genome. Mediates cell entry by attachment to an integrin receptor, usually host ITGAV/ITGB6. In addition, targets host MAVS to suppress type I IFN pathway (By similarity). Upon acidifcation in the endosome, dissociates into pentamers (By similarity).</text>
</comment>
<comment type="function">
    <molecule>Protein 2A</molecule>
    <text evidence="4">Mediates self-processing of the polyprotein by a translational effect termed 'ribosome skipping'. Mechanistically, 2A-mediated cleavage occurs between the C-terminal glycine and the proline of the downstream protein 2B. In the case of foot-and-mouth disease virus, the 2A oligopeptide is post-translationally 'trimmed' from the C-terminus of the upstream protein 1D by 3C proteinase.</text>
</comment>
<comment type="function">
    <molecule>Protein 2B</molecule>
    <text evidence="4">Plays an essential role in the virus replication cycle by acting as a viroporin. Creates a pore in the host endoplasmic reticulum and as a consequence releases Ca2+ in the cytoplasm of infected cell. In turn, high levels of cytoplasmic calcium may trigger membrane trafficking and transport of viral ER-associated proteins to viroplasms, sites of viral genome replication.</text>
</comment>
<comment type="function">
    <molecule>Protein 2C</molecule>
    <text evidence="4">Associates with and induces structural rearrangements of intracellular membranes. Triggers host autophagy by interacting with host BECN1 and thereby promotes viral replication. Participates in viral replication and interacts with host DHX9. Displays RNA-binding, nucleotide binding and NTPase activities. May play a role in virion morphogenesis and viral RNA encapsidation by interacting with the capsid protein VP3.</text>
</comment>
<comment type="function">
    <molecule>Protein 3A</molecule>
    <text evidence="4">Plays important roles in virus replication, virulence and host range. Cooperates with host DDX56 to inhibit IRF3 nuclear translocation and subsequent type I interferon production.</text>
</comment>
<comment type="function">
    <molecule>Protein 3B-1</molecule>
    <text evidence="4">Covalently linked to the 5'-end of both the positive-strand and negative-strand genomic RNAs. Acts as a genome-linked replication primer.</text>
</comment>
<comment type="function">
    <molecule>Protein 3B-2</molecule>
    <text evidence="4">Covalently linked to the 5'-end of both the positive-strand and negative-strand genomic RNAs. Acts as a genome-linked replication primer.</text>
</comment>
<comment type="function">
    <molecule>Protein 3B-3</molecule>
    <text evidence="4">Covalently linked to the 5'-end of both the positive-strand and negative-strand genomic RNAs. Acts as a genome-linked replication primer.</text>
</comment>
<comment type="function">
    <molecule>Protease 3C</molecule>
    <text evidence="4">Cysteine protease that generates mature viral proteins from the precursor polyprotein. In addition to its proteolytic activity, binds to viral RNA and thus influences viral genome replication. RNA and substrate bind cooperatively to the protease.</text>
</comment>
<comment type="function">
    <text evidence="4">RNA-directed RNA polymerase 3D-POL replicates genomic and antigenomic RNA by recognizing replications specific signals. Covalently attaches UMP to a tyrosine of VPg, which is used to prime RNA synthesis. The positive stranded RNA genome is first replicated at virus induced membranous vesicles, creating a dsRNA genomic replication form. This dsRNA is then used as template to synthesize positive stranded RNA genomes. ss(+)RNA genomes are either translated, replicated or encapsidated.</text>
</comment>
<comment type="catalytic activity">
    <molecule>Leader protease</molecule>
    <reaction>
        <text>Autocatalytically cleaves itself from the polyprotein of the foot-and-mouth disease virus by hydrolysis of a Lys-|-Gly bond, but then cleaves host cell initiation factor eIF-4G at bonds -Gly-|-Arg- and -Lys-|-Arg-.</text>
        <dbReference type="EC" id="3.4.22.46"/>
    </reaction>
</comment>
<comment type="catalytic activity">
    <molecule>Protein 2C</molecule>
    <reaction evidence="4">
        <text>a ribonucleoside 5'-triphosphate + H2O = a ribonucleoside 5'-diphosphate + phosphate + H(+)</text>
        <dbReference type="Rhea" id="RHEA:23680"/>
        <dbReference type="ChEBI" id="CHEBI:15377"/>
        <dbReference type="ChEBI" id="CHEBI:15378"/>
        <dbReference type="ChEBI" id="CHEBI:43474"/>
        <dbReference type="ChEBI" id="CHEBI:57930"/>
        <dbReference type="ChEBI" id="CHEBI:61557"/>
        <dbReference type="EC" id="3.6.1.15"/>
    </reaction>
</comment>
<comment type="catalytic activity">
    <molecule>RNA-directed RNA polymerase 3D-POL</molecule>
    <reaction evidence="10">
        <text>RNA(n) + a ribonucleoside 5'-triphosphate = RNA(n+1) + diphosphate</text>
        <dbReference type="Rhea" id="RHEA:21248"/>
        <dbReference type="Rhea" id="RHEA-COMP:14527"/>
        <dbReference type="Rhea" id="RHEA-COMP:17342"/>
        <dbReference type="ChEBI" id="CHEBI:33019"/>
        <dbReference type="ChEBI" id="CHEBI:61557"/>
        <dbReference type="ChEBI" id="CHEBI:140395"/>
        <dbReference type="EC" id="2.7.7.48"/>
    </reaction>
</comment>
<comment type="catalytic activity">
    <molecule>Protease 3C</molecule>
    <reaction evidence="12">
        <text>Selective cleavage of Gln-|-Gly bond in the poliovirus polyprotein. In other picornavirus reactions Glu may be substituted for Gln, and Ser or Thr for Gly.</text>
        <dbReference type="EC" id="3.4.22.28"/>
    </reaction>
</comment>
<comment type="subunit">
    <molecule>Leader protease</molecule>
    <text evidence="4">Interacts with host ISG15.</text>
</comment>
<comment type="subunit">
    <molecule>Capsid protein VP1</molecule>
    <text evidence="4">Interacts (via R-G-D motif) with host ITGAV/ITGB6 (By similarity). Interacts with host MAVS; this interaction inhibits binding of host TRAF3 to MAVS, thereby suppressing interferon-mediated responses (By similarity).</text>
</comment>
<comment type="subunit">
    <molecule>Protein 2B</molecule>
    <text evidence="4">Forms homooligomers.</text>
</comment>
<comment type="subunit">
    <molecule>Protein 2C</molecule>
    <text evidence="4">Homohexamer. Interacts with host VIM. Interacts with host BECN1.</text>
</comment>
<comment type="subunit">
    <molecule>Protein 3A</molecule>
    <text evidence="4">Interacts with host DCTN3.</text>
</comment>
<comment type="subunit">
    <molecule>Protein 3B-1</molecule>
    <text evidence="7">Interacts with RNA-dependent RNA polymerase; this interaction allows 3B-1 to binds 2 polymerases and act as a primer. It also allows the recruitment of the RNA-dependent RNA polymerase to host membranes.</text>
</comment>
<comment type="subunit">
    <molecule>Protein 3B-2</molecule>
    <text evidence="7">Interacts with RNA-dependent RNA polymerase; this interaction allows 3B-2 to act as a primer.</text>
</comment>
<comment type="subunit">
    <molecule>Protein 3B-3</molecule>
    <text evidence="7">Interacts with RNA-dependent RNA polymerase; this interaction allows 3B-3 to act as a primer.</text>
</comment>
<comment type="subunit">
    <molecule>RNA-directed RNA polymerase 3D-POL</molecule>
    <text evidence="7">Interacts with 3B-1; this interaction allows 3B-1 to binds 2 polymerases and act as a primer. It also allows the recruitment of the RNA-dependent RNA polymerase to host membranes (By similarity). Interacts with 3B-2; this interaction allows 3B-2 to act as a primer (By similarity). Interacts with 3B-3; this interaction allows 3B-3 to act as a primer (By similarity).</text>
</comment>
<comment type="subcellular location">
    <molecule>Leader protease</molecule>
    <subcellularLocation>
        <location evidence="4">Host nucleus</location>
    </subcellularLocation>
    <subcellularLocation>
        <location evidence="4">Host cytoplasm</location>
    </subcellularLocation>
</comment>
<comment type="subcellular location">
    <molecule>Capsid protein VP2</molecule>
    <subcellularLocation>
        <location evidence="4">Virion</location>
    </subcellularLocation>
    <subcellularLocation>
        <location evidence="14">Host cytoplasm</location>
    </subcellularLocation>
</comment>
<comment type="subcellular location">
    <molecule>Capsid protein VP3</molecule>
    <subcellularLocation>
        <location evidence="4">Virion</location>
    </subcellularLocation>
    <subcellularLocation>
        <location evidence="14">Host cytoplasm</location>
    </subcellularLocation>
</comment>
<comment type="subcellular location">
    <molecule>Capsid protein VP1</molecule>
    <subcellularLocation>
        <location evidence="4">Virion</location>
    </subcellularLocation>
    <subcellularLocation>
        <location evidence="14">Host cytoplasm</location>
    </subcellularLocation>
</comment>
<comment type="subcellular location">
    <molecule>Protein 2B</molecule>
    <subcellularLocation>
        <location evidence="4">Host endoplasmic reticulum membrane</location>
    </subcellularLocation>
</comment>
<comment type="subcellular location">
    <molecule>Protein 2C</molecule>
    <subcellularLocation>
        <location evidence="14">Host cytoplasmic vesicle membrane</location>
        <topology evidence="14">Peripheral membrane protein</topology>
        <orientation evidence="14">Cytoplasmic side</orientation>
    </subcellularLocation>
    <text evidence="1">Probably localizes to the surface of intracellular membrane vesicles that are induced after virus infection as the site for viral RNA replication. These vesicles are derived from the endoplasmic reticulum (By similarity).</text>
</comment>
<comment type="subcellular location">
    <molecule>Protein 3A</molecule>
    <subcellularLocation>
        <location evidence="14">Host cytoplasmic vesicle membrane</location>
        <topology evidence="14">Peripheral membrane protein</topology>
        <orientation evidence="14">Cytoplasmic side</orientation>
    </subcellularLocation>
    <text evidence="1">Probably localizes to the surface of intracellular membrane vesicles that are induced after virus infection as the site for viral RNA replication. These vesicles are derived from the endoplasmic reticulum (By similarity).</text>
</comment>
<comment type="subcellular location">
    <molecule>Protein 3B-1</molecule>
    <subcellularLocation>
        <location evidence="14">Virion</location>
    </subcellularLocation>
</comment>
<comment type="subcellular location">
    <molecule>Protein 3B-2</molecule>
    <subcellularLocation>
        <location evidence="14">Virion</location>
    </subcellularLocation>
</comment>
<comment type="subcellular location">
    <molecule>Protein 3B-3</molecule>
    <subcellularLocation>
        <location evidence="14">Virion</location>
    </subcellularLocation>
</comment>
<comment type="subcellular location">
    <molecule>Protease 3C</molecule>
    <subcellularLocation>
        <location evidence="14">Host cytoplasm</location>
    </subcellularLocation>
</comment>
<comment type="subcellular location">
    <molecule>RNA-directed RNA polymerase 3D-POL</molecule>
    <subcellularLocation>
        <location evidence="14">Host cytoplasmic vesicle membrane</location>
        <topology evidence="14">Peripheral membrane protein</topology>
        <orientation evidence="14">Cytoplasmic side</orientation>
    </subcellularLocation>
    <text evidence="1">Probably localizes to the surface of intracellular membrane vesicles that are induced after virus infection as the site for viral RNA replication. These vesicles are derived from the endoplasmic reticulum (By similarity).</text>
</comment>
<comment type="alternative products">
    <event type="alternative initiation"/>
    <isoform>
        <id>P49303-1</id>
        <name>Lab</name>
        <sequence type="displayed"/>
    </isoform>
    <isoform>
        <id>P49303-2</id>
        <name>Lb</name>
        <sequence type="described" ref="VSP_018981"/>
    </isoform>
</comment>
<comment type="PTM">
    <molecule>Leader protease</molecule>
    <text evidence="4">Removes six residues from its own C-terminus, generating sLb(pro).</text>
</comment>
<comment type="PTM">
    <molecule>Genome polyprotein</molecule>
    <text evidence="4">Specific enzymatic cleavages in vivo by the viral proteases yield a variety of precursors and mature proteins. The polyprotein seems to be cotranslationally cleaved at the 2A/2B junction by a ribosomal skip from one codon to the next without formation of a peptide bond. This process would release the L-P1-2A peptide from the translational complex.</text>
</comment>
<comment type="PTM">
    <molecule>Capsid protein VP0</molecule>
    <text evidence="4">During virion maturation, immature virions are rendered infectious following cleavage of VP0 into VP4 and VP2. This maturation seems to be an autocatalytic event triggered by the presence of RNA in the capsid and is followed by a conformational change of the particle.</text>
</comment>
<comment type="PTM">
    <molecule>Capsid protein VP4</molecule>
    <text evidence="7">Myristoylation is required during RNA encapsidation and formation of the mature virus particle.</text>
</comment>
<comment type="PTM">
    <molecule>Protein 3B-1</molecule>
    <text evidence="4">Uridylylated by the polymerase and covalently linked to the 5'-end of genomic RNA. These uridylylated forms act as a nucleotide-peptide primer for the polymerase.</text>
</comment>
<comment type="PTM">
    <molecule>Protein 3B-2</molecule>
    <text evidence="4">Uridylylated by the polymerase and covalently linked to the 5'-end of genomic RNA. These uridylylated forms act as a nucleotide-peptide primer for the polymerase.</text>
</comment>
<comment type="PTM">
    <molecule>Protein 3B-3</molecule>
    <text evidence="4">Uridylylated by the polymerase and covalently linked to the 5'-end of genomic RNA. These uridylylated forms act as a nucleotide-peptide primer for the polymerase.</text>
</comment>
<comment type="miscellaneous">
    <molecule>Capsid protein VP1</molecule>
    <text evidence="14">Contains the main antigenic determinants of the virion; therefore, changes in its sequence must be responsible for the high antigenic variability of the virus.</text>
</comment>
<comment type="miscellaneous">
    <text evidence="1">The capsid protein VP1 contains the main antigenic determinants of the virion; therefore, changes in its sequence must be responsible for the high antigenic variability of the virus.</text>
</comment>
<comment type="similarity">
    <text evidence="14">Belongs to the picornaviruses polyprotein family.</text>
</comment>
<keyword id="KW-0002">3D-structure</keyword>
<keyword id="KW-0024">Alternative initiation</keyword>
<keyword id="KW-0067">ATP-binding</keyword>
<keyword id="KW-0167">Capsid protein</keyword>
<keyword id="KW-1165">Clathrin-mediated endocytosis of virus by host</keyword>
<keyword id="KW-0191">Covalent protein-RNA linkage</keyword>
<keyword id="KW-1015">Disulfide bond</keyword>
<keyword id="KW-0347">Helicase</keyword>
<keyword id="KW-1035">Host cytoplasm</keyword>
<keyword id="KW-1036">Host cytoplasmic vesicle</keyword>
<keyword id="KW-1038">Host endoplasmic reticulum</keyword>
<keyword id="KW-1043">Host membrane</keyword>
<keyword id="KW-1048">Host nucleus</keyword>
<keyword id="KW-0945">Host-virus interaction</keyword>
<keyword id="KW-0378">Hydrolase</keyword>
<keyword id="KW-0407">Ion channel</keyword>
<keyword id="KW-0406">Ion transport</keyword>
<keyword id="KW-0449">Lipoprotein</keyword>
<keyword id="KW-0472">Membrane</keyword>
<keyword id="KW-1122">Modulation of host chromatin by virus</keyword>
<keyword id="KW-0519">Myristate</keyword>
<keyword id="KW-0547">Nucleotide-binding</keyword>
<keyword id="KW-0548">Nucleotidyltransferase</keyword>
<keyword id="KW-0597">Phosphoprotein</keyword>
<keyword id="KW-0645">Protease</keyword>
<keyword id="KW-0694">RNA-binding</keyword>
<keyword id="KW-0696">RNA-directed RNA polymerase</keyword>
<keyword id="KW-1143">T=pseudo3 icosahedral capsid protein</keyword>
<keyword id="KW-0788">Thiol protease</keyword>
<keyword id="KW-0808">Transferase</keyword>
<keyword id="KW-0810">Translation regulation</keyword>
<keyword id="KW-0813">Transport</keyword>
<keyword id="KW-1161">Viral attachment to host cell</keyword>
<keyword id="KW-1182">Viral ion channel</keyword>
<keyword id="KW-1162">Viral penetration into host cytoplasm</keyword>
<keyword id="KW-0693">Viral RNA replication</keyword>
<keyword id="KW-0946">Virion</keyword>
<keyword id="KW-1164">Virus endocytosis by host</keyword>
<keyword id="KW-1160">Virus entry into host cell</keyword>
<dbReference type="EC" id="3.4.22.46" evidence="4"/>
<dbReference type="EC" id="3.6.1.15" evidence="4"/>
<dbReference type="EC" id="3.4.22.28"/>
<dbReference type="EC" id="2.7.7.48" evidence="4"/>
<dbReference type="EMBL" id="X74812">
    <property type="protein sequence ID" value="CAA52812.1"/>
    <property type="molecule type" value="Genomic_RNA"/>
</dbReference>
<dbReference type="EMBL" id="M38362">
    <property type="protein sequence ID" value="AAA42664.1"/>
    <property type="molecule type" value="Genomic_RNA"/>
</dbReference>
<dbReference type="PIR" id="S37077">
    <property type="entry name" value="S37077"/>
</dbReference>
<dbReference type="PDB" id="1FMD">
    <property type="method" value="X-ray"/>
    <property type="resolution" value="3.50 A"/>
    <property type="chains" value="4=202-286"/>
</dbReference>
<dbReference type="PDB" id="6A6H">
    <property type="method" value="X-ray"/>
    <property type="resolution" value="2.31 A"/>
    <property type="chains" value="C=440-448"/>
</dbReference>
<dbReference type="PDB" id="7D3R">
    <property type="method" value="EM"/>
    <property type="resolution" value="3.49 A"/>
    <property type="chains" value="3=505-725"/>
</dbReference>
<dbReference type="PDB" id="7FEJ">
    <property type="method" value="EM"/>
    <property type="resolution" value="3.91 A"/>
    <property type="chains" value="3=505-725"/>
</dbReference>
<dbReference type="PDBsum" id="1FMD"/>
<dbReference type="PDBsum" id="6A6H"/>
<dbReference type="PDBsum" id="7D3R"/>
<dbReference type="PDBsum" id="7FEJ"/>
<dbReference type="SMR" id="P49303"/>
<dbReference type="MEROPS" id="C03.008"/>
<dbReference type="EvolutionaryTrace" id="P49303"/>
<dbReference type="Proteomes" id="UP000008621">
    <property type="component" value="Genome"/>
</dbReference>
<dbReference type="GO" id="GO:0044162">
    <property type="term" value="C:host cell cytoplasmic vesicle membrane"/>
    <property type="evidence" value="ECO:0007669"/>
    <property type="project" value="UniProtKB-SubCell"/>
</dbReference>
<dbReference type="GO" id="GO:0044167">
    <property type="term" value="C:host cell endoplasmic reticulum membrane"/>
    <property type="evidence" value="ECO:0007669"/>
    <property type="project" value="UniProtKB-SubCell"/>
</dbReference>
<dbReference type="GO" id="GO:0042025">
    <property type="term" value="C:host cell nucleus"/>
    <property type="evidence" value="ECO:0007669"/>
    <property type="project" value="UniProtKB-SubCell"/>
</dbReference>
<dbReference type="GO" id="GO:0016020">
    <property type="term" value="C:membrane"/>
    <property type="evidence" value="ECO:0007669"/>
    <property type="project" value="UniProtKB-KW"/>
</dbReference>
<dbReference type="GO" id="GO:0039618">
    <property type="term" value="C:T=pseudo3 icosahedral viral capsid"/>
    <property type="evidence" value="ECO:0007669"/>
    <property type="project" value="UniProtKB-KW"/>
</dbReference>
<dbReference type="GO" id="GO:0005524">
    <property type="term" value="F:ATP binding"/>
    <property type="evidence" value="ECO:0007669"/>
    <property type="project" value="UniProtKB-KW"/>
</dbReference>
<dbReference type="GO" id="GO:0015267">
    <property type="term" value="F:channel activity"/>
    <property type="evidence" value="ECO:0007669"/>
    <property type="project" value="UniProtKB-KW"/>
</dbReference>
<dbReference type="GO" id="GO:0004197">
    <property type="term" value="F:cysteine-type endopeptidase activity"/>
    <property type="evidence" value="ECO:0007669"/>
    <property type="project" value="UniProtKB-EC"/>
</dbReference>
<dbReference type="GO" id="GO:0017111">
    <property type="term" value="F:ribonucleoside triphosphate phosphatase activity"/>
    <property type="evidence" value="ECO:0007669"/>
    <property type="project" value="UniProtKB-EC"/>
</dbReference>
<dbReference type="GO" id="GO:0003723">
    <property type="term" value="F:RNA binding"/>
    <property type="evidence" value="ECO:0007669"/>
    <property type="project" value="UniProtKB-KW"/>
</dbReference>
<dbReference type="GO" id="GO:0003724">
    <property type="term" value="F:RNA helicase activity"/>
    <property type="evidence" value="ECO:0007669"/>
    <property type="project" value="InterPro"/>
</dbReference>
<dbReference type="GO" id="GO:0003968">
    <property type="term" value="F:RNA-directed RNA polymerase activity"/>
    <property type="evidence" value="ECO:0007669"/>
    <property type="project" value="UniProtKB-KW"/>
</dbReference>
<dbReference type="GO" id="GO:0005198">
    <property type="term" value="F:structural molecule activity"/>
    <property type="evidence" value="ECO:0007669"/>
    <property type="project" value="InterPro"/>
</dbReference>
<dbReference type="GO" id="GO:0075512">
    <property type="term" value="P:clathrin-dependent endocytosis of virus by host cell"/>
    <property type="evidence" value="ECO:0007669"/>
    <property type="project" value="UniProtKB-KW"/>
</dbReference>
<dbReference type="GO" id="GO:0006351">
    <property type="term" value="P:DNA-templated transcription"/>
    <property type="evidence" value="ECO:0007669"/>
    <property type="project" value="InterPro"/>
</dbReference>
<dbReference type="GO" id="GO:0075522">
    <property type="term" value="P:IRES-dependent viral translational initiation"/>
    <property type="evidence" value="ECO:0000314"/>
    <property type="project" value="UniProtKB"/>
</dbReference>
<dbReference type="GO" id="GO:0034220">
    <property type="term" value="P:monoatomic ion transmembrane transport"/>
    <property type="evidence" value="ECO:0007669"/>
    <property type="project" value="UniProtKB-KW"/>
</dbReference>
<dbReference type="GO" id="GO:0006508">
    <property type="term" value="P:proteolysis"/>
    <property type="evidence" value="ECO:0007669"/>
    <property type="project" value="UniProtKB-KW"/>
</dbReference>
<dbReference type="GO" id="GO:0006417">
    <property type="term" value="P:regulation of translation"/>
    <property type="evidence" value="ECO:0007669"/>
    <property type="project" value="UniProtKB-KW"/>
</dbReference>
<dbReference type="GO" id="GO:0039520">
    <property type="term" value="P:symbiont-mediated activation of host autophagy"/>
    <property type="evidence" value="ECO:0000250"/>
    <property type="project" value="UniProtKB"/>
</dbReference>
<dbReference type="GO" id="GO:0039525">
    <property type="term" value="P:symbiont-mediated perturbation of host chromatin organization"/>
    <property type="evidence" value="ECO:0007669"/>
    <property type="project" value="UniProtKB-KW"/>
</dbReference>
<dbReference type="GO" id="GO:0019082">
    <property type="term" value="P:viral protein processing"/>
    <property type="evidence" value="ECO:0007669"/>
    <property type="project" value="InterPro"/>
</dbReference>
<dbReference type="GO" id="GO:0039694">
    <property type="term" value="P:viral RNA genome replication"/>
    <property type="evidence" value="ECO:0007669"/>
    <property type="project" value="InterPro"/>
</dbReference>
<dbReference type="GO" id="GO:0019062">
    <property type="term" value="P:virion attachment to host cell"/>
    <property type="evidence" value="ECO:0007669"/>
    <property type="project" value="UniProtKB-KW"/>
</dbReference>
<dbReference type="CDD" id="cd00205">
    <property type="entry name" value="rhv_like"/>
    <property type="match status" value="3"/>
</dbReference>
<dbReference type="FunFam" id="1.20.960.20:FF:000002">
    <property type="entry name" value="Genome polyprotein"/>
    <property type="match status" value="1"/>
</dbReference>
<dbReference type="FunFam" id="2.40.10.10:FF:000108">
    <property type="entry name" value="Genome polyprotein"/>
    <property type="match status" value="1"/>
</dbReference>
<dbReference type="FunFam" id="2.60.120.20:FF:000005">
    <property type="entry name" value="Genome polyprotein"/>
    <property type="match status" value="1"/>
</dbReference>
<dbReference type="FunFam" id="2.60.120.20:FF:000006">
    <property type="entry name" value="Genome polyprotein"/>
    <property type="match status" value="1"/>
</dbReference>
<dbReference type="FunFam" id="2.60.120.20:FF:000012">
    <property type="entry name" value="Genome polyprotein"/>
    <property type="match status" value="1"/>
</dbReference>
<dbReference type="FunFam" id="3.30.70.270:FF:000031">
    <property type="entry name" value="Genome polyprotein"/>
    <property type="match status" value="1"/>
</dbReference>
<dbReference type="Gene3D" id="1.20.960.20">
    <property type="match status" value="1"/>
</dbReference>
<dbReference type="Gene3D" id="2.60.120.20">
    <property type="match status" value="3"/>
</dbReference>
<dbReference type="Gene3D" id="3.30.70.270">
    <property type="match status" value="2"/>
</dbReference>
<dbReference type="Gene3D" id="4.10.90.10">
    <property type="entry name" value="Capsid protein VP4 superfamily, Picornavirus"/>
    <property type="match status" value="1"/>
</dbReference>
<dbReference type="Gene3D" id="3.90.70.10">
    <property type="entry name" value="Cysteine proteinases"/>
    <property type="match status" value="1"/>
</dbReference>
<dbReference type="Gene3D" id="2.40.10.10">
    <property type="entry name" value="Trypsin-like serine proteases"/>
    <property type="match status" value="2"/>
</dbReference>
<dbReference type="InterPro" id="IPR015031">
    <property type="entry name" value="Capsid_VP4_Picornavir"/>
</dbReference>
<dbReference type="InterPro" id="IPR037080">
    <property type="entry name" value="Capsid_VP4_sf_Picornavirus"/>
</dbReference>
<dbReference type="InterPro" id="IPR043502">
    <property type="entry name" value="DNA/RNA_pol_sf"/>
</dbReference>
<dbReference type="InterPro" id="IPR004080">
    <property type="entry name" value="FMDV_VP1_coat"/>
</dbReference>
<dbReference type="InterPro" id="IPR004004">
    <property type="entry name" value="Helic/Pol/Pept_Calicivir-typ"/>
</dbReference>
<dbReference type="InterPro" id="IPR000605">
    <property type="entry name" value="Helicase_SF3_ssDNA/RNA_vir"/>
</dbReference>
<dbReference type="InterPro" id="IPR014759">
    <property type="entry name" value="Helicase_SF3_ssRNA_vir"/>
</dbReference>
<dbReference type="InterPro" id="IPR027417">
    <property type="entry name" value="P-loop_NTPase"/>
</dbReference>
<dbReference type="InterPro" id="IPR038765">
    <property type="entry name" value="Papain-like_cys_pep_sf"/>
</dbReference>
<dbReference type="InterPro" id="IPR044067">
    <property type="entry name" value="PCV_3C_PRO"/>
</dbReference>
<dbReference type="InterPro" id="IPR008739">
    <property type="entry name" value="Peptidase_C28"/>
</dbReference>
<dbReference type="InterPro" id="IPR000199">
    <property type="entry name" value="Peptidase_C3A/C3B_picornavir"/>
</dbReference>
<dbReference type="InterPro" id="IPR009003">
    <property type="entry name" value="Peptidase_S1_PA"/>
</dbReference>
<dbReference type="InterPro" id="IPR043504">
    <property type="entry name" value="Peptidase_S1_PA_chymotrypsin"/>
</dbReference>
<dbReference type="InterPro" id="IPR001676">
    <property type="entry name" value="Picornavirus_capsid"/>
</dbReference>
<dbReference type="InterPro" id="IPR043128">
    <property type="entry name" value="Rev_trsase/Diguanyl_cyclase"/>
</dbReference>
<dbReference type="InterPro" id="IPR033703">
    <property type="entry name" value="Rhv-like"/>
</dbReference>
<dbReference type="InterPro" id="IPR001205">
    <property type="entry name" value="RNA-dir_pol_C"/>
</dbReference>
<dbReference type="InterPro" id="IPR007094">
    <property type="entry name" value="RNA-dir_pol_PSvirus"/>
</dbReference>
<dbReference type="InterPro" id="IPR029053">
    <property type="entry name" value="Viral_coat"/>
</dbReference>
<dbReference type="Pfam" id="PF05408">
    <property type="entry name" value="Peptidase_C28"/>
    <property type="match status" value="1"/>
</dbReference>
<dbReference type="Pfam" id="PF00548">
    <property type="entry name" value="Peptidase_C3"/>
    <property type="match status" value="1"/>
</dbReference>
<dbReference type="Pfam" id="PF00680">
    <property type="entry name" value="RdRP_1"/>
    <property type="match status" value="1"/>
</dbReference>
<dbReference type="Pfam" id="PF00073">
    <property type="entry name" value="Rhv"/>
    <property type="match status" value="2"/>
</dbReference>
<dbReference type="Pfam" id="PF22663">
    <property type="entry name" value="Rhv_5"/>
    <property type="match status" value="1"/>
</dbReference>
<dbReference type="Pfam" id="PF00910">
    <property type="entry name" value="RNA_helicase"/>
    <property type="match status" value="1"/>
</dbReference>
<dbReference type="Pfam" id="PF08935">
    <property type="entry name" value="VP4_2"/>
    <property type="match status" value="1"/>
</dbReference>
<dbReference type="PRINTS" id="PR00918">
    <property type="entry name" value="CALICVIRUSNS"/>
</dbReference>
<dbReference type="PRINTS" id="PR01542">
    <property type="entry name" value="FMDVP1COAT"/>
</dbReference>
<dbReference type="SUPFAM" id="SSF54001">
    <property type="entry name" value="Cysteine proteinases"/>
    <property type="match status" value="1"/>
</dbReference>
<dbReference type="SUPFAM" id="SSF56672">
    <property type="entry name" value="DNA/RNA polymerases"/>
    <property type="match status" value="1"/>
</dbReference>
<dbReference type="SUPFAM" id="SSF52540">
    <property type="entry name" value="P-loop containing nucleoside triphosphate hydrolases"/>
    <property type="match status" value="1"/>
</dbReference>
<dbReference type="SUPFAM" id="SSF88633">
    <property type="entry name" value="Positive stranded ssRNA viruses"/>
    <property type="match status" value="2"/>
</dbReference>
<dbReference type="SUPFAM" id="SSF50494">
    <property type="entry name" value="Trypsin-like serine proteases"/>
    <property type="match status" value="1"/>
</dbReference>
<dbReference type="PROSITE" id="PS51887">
    <property type="entry name" value="APHTHOVIRUS_LPRO"/>
    <property type="match status" value="1"/>
</dbReference>
<dbReference type="PROSITE" id="PS51874">
    <property type="entry name" value="PCV_3C_PRO"/>
    <property type="match status" value="1"/>
</dbReference>
<dbReference type="PROSITE" id="PS50507">
    <property type="entry name" value="RDRP_SSRNA_POS"/>
    <property type="match status" value="1"/>
</dbReference>
<dbReference type="PROSITE" id="PS51218">
    <property type="entry name" value="SF3_HELICASE_2"/>
    <property type="match status" value="1"/>
</dbReference>
<evidence type="ECO:0000250" key="1"/>
<evidence type="ECO:0000250" key="2">
    <source>
        <dbReference type="UniProtKB" id="A2I7M2"/>
    </source>
</evidence>
<evidence type="ECO:0000250" key="3">
    <source>
        <dbReference type="UniProtKB" id="P03300"/>
    </source>
</evidence>
<evidence type="ECO:0000250" key="4">
    <source>
        <dbReference type="UniProtKB" id="P03305"/>
    </source>
</evidence>
<evidence type="ECO:0000250" key="5">
    <source>
        <dbReference type="UniProtKB" id="P03306"/>
    </source>
</evidence>
<evidence type="ECO:0000250" key="6">
    <source>
        <dbReference type="UniProtKB" id="P03308"/>
    </source>
</evidence>
<evidence type="ECO:0000250" key="7">
    <source>
        <dbReference type="UniProtKB" id="P03311"/>
    </source>
</evidence>
<evidence type="ECO:0000250" key="8">
    <source>
        <dbReference type="UniProtKB" id="P12296"/>
    </source>
</evidence>
<evidence type="ECO:0000255" key="9"/>
<evidence type="ECO:0000255" key="10">
    <source>
        <dbReference type="PROSITE-ProRule" id="PRU00539"/>
    </source>
</evidence>
<evidence type="ECO:0000255" key="11">
    <source>
        <dbReference type="PROSITE-ProRule" id="PRU00551"/>
    </source>
</evidence>
<evidence type="ECO:0000255" key="12">
    <source>
        <dbReference type="PROSITE-ProRule" id="PRU01222"/>
    </source>
</evidence>
<evidence type="ECO:0000256" key="13">
    <source>
        <dbReference type="SAM" id="MobiDB-lite"/>
    </source>
</evidence>
<evidence type="ECO:0000305" key="14"/>
<evidence type="ECO:0007829" key="15">
    <source>
        <dbReference type="PDB" id="1FMD"/>
    </source>
</evidence>
<evidence type="ECO:0007829" key="16">
    <source>
        <dbReference type="PDB" id="7D3R"/>
    </source>
</evidence>
<feature type="chain" id="PRO_0000039850" description="Genome polyprotein">
    <location>
        <begin position="1"/>
        <end position="2336"/>
    </location>
</feature>
<feature type="chain" id="PRO_0000039851" description="Leader protease">
    <location>
        <begin position="1"/>
        <end position="201"/>
    </location>
</feature>
<feature type="chain" id="PRO_0000374075" description="Capsid protein VP0" evidence="9">
    <location>
        <begin position="202"/>
        <end position="504"/>
    </location>
</feature>
<feature type="chain" id="PRO_0000039854" description="Capsid protein VP4" evidence="9">
    <location>
        <begin position="202"/>
        <end position="286"/>
    </location>
</feature>
<feature type="chain" id="PRO_0000039855" description="Capsid protein VP2" evidence="9">
    <location>
        <begin position="287"/>
        <end position="504"/>
    </location>
</feature>
<feature type="chain" id="PRO_0000039856" description="Capsid protein VP3" evidence="9">
    <location>
        <begin position="505"/>
        <end position="725"/>
    </location>
</feature>
<feature type="chain" id="PRO_0000039857" description="Capsid protein VP1" evidence="9">
    <location>
        <begin position="726"/>
        <end position="936"/>
    </location>
</feature>
<feature type="chain" id="PRO_0000039858" description="Protein 2A" evidence="9">
    <location>
        <begin position="937"/>
        <end position="954"/>
    </location>
</feature>
<feature type="chain" id="PRO_0000039859" description="Protein 2B" evidence="9">
    <location>
        <begin position="955"/>
        <end position="1108"/>
    </location>
</feature>
<feature type="chain" id="PRO_0000039860" description="Protein 2C" evidence="9">
    <location>
        <begin position="1109"/>
        <end position="1426"/>
    </location>
</feature>
<feature type="chain" id="PRO_0000039861" description="Protein 3A" evidence="9">
    <location>
        <begin position="1427"/>
        <end position="1579"/>
    </location>
</feature>
<feature type="chain" id="PRO_0000039862" description="Protein 3B-1" evidence="9">
    <location>
        <begin position="1580"/>
        <end position="1602"/>
    </location>
</feature>
<feature type="chain" id="PRO_0000039863" description="Protein 3B-2" evidence="9">
    <location>
        <begin position="1603"/>
        <end position="1626"/>
    </location>
</feature>
<feature type="chain" id="PRO_0000039864" description="Protein 3B-3" evidence="9">
    <location>
        <begin position="1627"/>
        <end position="1650"/>
    </location>
</feature>
<feature type="chain" id="PRO_0000039865" description="Protease 3C" evidence="9">
    <location>
        <begin position="1651"/>
        <end position="1863"/>
    </location>
</feature>
<feature type="chain" id="PRO_0000039866" description="RNA-directed RNA polymerase 3D-POL" evidence="9">
    <location>
        <begin position="1864"/>
        <end position="2336"/>
    </location>
</feature>
<feature type="topological domain" description="Cytoplasmic" evidence="9">
    <location>
        <begin position="1"/>
        <end position="1481"/>
    </location>
</feature>
<feature type="intramembrane region" evidence="9">
    <location>
        <begin position="1482"/>
        <end position="1502"/>
    </location>
</feature>
<feature type="topological domain" description="Cytoplasmic" evidence="9">
    <location>
        <begin position="1503"/>
        <end position="2336"/>
    </location>
</feature>
<feature type="domain" description="Peptidase C28">
    <location>
        <begin position="1"/>
        <end position="201"/>
    </location>
</feature>
<feature type="domain" description="SF3 helicase" evidence="11">
    <location>
        <begin position="1190"/>
        <end position="1354"/>
    </location>
</feature>
<feature type="domain" description="Peptidase C3" evidence="12">
    <location>
        <begin position="1653"/>
        <end position="1849"/>
    </location>
</feature>
<feature type="domain" description="RdRp catalytic" evidence="10">
    <location>
        <begin position="2097"/>
        <end position="2215"/>
    </location>
</feature>
<feature type="region of interest" description="Disordered" evidence="13">
    <location>
        <begin position="197"/>
        <end position="218"/>
    </location>
</feature>
<feature type="region of interest" description="Disordered" evidence="13">
    <location>
        <begin position="238"/>
        <end position="265"/>
    </location>
</feature>
<feature type="region of interest" description="Antigenic epitope" evidence="2">
    <location>
        <begin position="789"/>
        <end position="797"/>
    </location>
</feature>
<feature type="region of interest" description="Disordered" evidence="13">
    <location>
        <begin position="1556"/>
        <end position="1591"/>
    </location>
</feature>
<feature type="short sequence motif" description="Cell attachment site" evidence="4">
    <location>
        <begin position="869"/>
        <end position="871"/>
    </location>
</feature>
<feature type="short sequence motif" description="Nuclear localization signal" evidence="7">
    <location>
        <begin position="1879"/>
        <end position="1887"/>
    </location>
</feature>
<feature type="compositionally biased region" description="Polar residues" evidence="13">
    <location>
        <begin position="204"/>
        <end position="218"/>
    </location>
</feature>
<feature type="compositionally biased region" description="Polar residues" evidence="13">
    <location>
        <begin position="238"/>
        <end position="251"/>
    </location>
</feature>
<feature type="compositionally biased region" description="Low complexity" evidence="13">
    <location>
        <begin position="252"/>
        <end position="265"/>
    </location>
</feature>
<feature type="active site" description="For leader protease activity" evidence="1">
    <location>
        <position position="51"/>
    </location>
</feature>
<feature type="active site" description="For leader protease activity" evidence="1">
    <location>
        <position position="148"/>
    </location>
</feature>
<feature type="active site" description="For leader protease activity" evidence="1">
    <location>
        <position position="163"/>
    </location>
</feature>
<feature type="active site" description="For protease 3C activity; Proton donor/acceptor" evidence="12">
    <location>
        <position position="1696"/>
    </location>
</feature>
<feature type="active site" description="For protease 3C activity" evidence="12">
    <location>
        <position position="1734"/>
    </location>
</feature>
<feature type="active site" description="For protease 3C activity" evidence="12">
    <location>
        <position position="1813"/>
    </location>
</feature>
<feature type="active site" description="For RdRp activity" evidence="8">
    <location>
        <position position="2201"/>
    </location>
</feature>
<feature type="binding site" evidence="11">
    <location>
        <begin position="1218"/>
        <end position="1225"/>
    </location>
    <ligand>
        <name>ATP</name>
        <dbReference type="ChEBI" id="CHEBI:30616"/>
    </ligand>
</feature>
<feature type="site" description="Cleavage; by leader protease" evidence="9">
    <location>
        <begin position="201"/>
        <end position="202"/>
    </location>
</feature>
<feature type="site" description="Cleavage" evidence="9">
    <location>
        <begin position="286"/>
        <end position="287"/>
    </location>
</feature>
<feature type="site" description="Cleavage; by picornain 3C" evidence="9">
    <location>
        <begin position="504"/>
        <end position="505"/>
    </location>
</feature>
<feature type="site" description="Cleavage; by picornain 3C" evidence="9">
    <location>
        <begin position="725"/>
        <end position="726"/>
    </location>
</feature>
<feature type="site" description="Cleavage; by picornain 3C" evidence="9">
    <location>
        <begin position="936"/>
        <end position="937"/>
    </location>
</feature>
<feature type="site" description="Cleavage; by ribosomal skip" evidence="9">
    <location>
        <begin position="954"/>
        <end position="955"/>
    </location>
</feature>
<feature type="site" description="Cleavage; by picornain 3C" evidence="9">
    <location>
        <begin position="1108"/>
        <end position="1109"/>
    </location>
</feature>
<feature type="site" description="Cleavage; by picornain 3C" evidence="9">
    <location>
        <begin position="1426"/>
        <end position="1427"/>
    </location>
</feature>
<feature type="site" description="Cleavage; by picornain 3C" evidence="9">
    <location>
        <begin position="1579"/>
        <end position="1580"/>
    </location>
</feature>
<feature type="site" description="Cleavage; by picornain 3C" evidence="9">
    <location>
        <begin position="1602"/>
        <end position="1603"/>
    </location>
</feature>
<feature type="site" description="Cleavage; by picornain 3C" evidence="9">
    <location>
        <begin position="1626"/>
        <end position="1627"/>
    </location>
</feature>
<feature type="site" description="Cleavage; by picornain 3C" evidence="9">
    <location>
        <begin position="1650"/>
        <end position="1651"/>
    </location>
</feature>
<feature type="site" description="Cleavage; by picornain 3C" evidence="9">
    <location>
        <begin position="1863"/>
        <end position="1864"/>
    </location>
</feature>
<feature type="modified residue" description="O-(5'-phospho-RNA)-tyrosine" evidence="4">
    <location>
        <position position="1582"/>
    </location>
</feature>
<feature type="modified residue" description="O-(5'-phospho-RNA)-tyrosine" evidence="4">
    <location>
        <position position="1605"/>
    </location>
</feature>
<feature type="modified residue" description="O-(5'-phospho-RNA)-tyrosine" evidence="4">
    <location>
        <position position="1629"/>
    </location>
</feature>
<feature type="lipid moiety-binding region" description="N-myristoyl glycine; by host" evidence="7">
    <location>
        <position position="202"/>
    </location>
</feature>
<feature type="disulfide bond" description="Interchain; in VP3 dimer" evidence="4">
    <location>
        <position position="511"/>
    </location>
</feature>
<feature type="splice variant" id="VSP_018981" description="In isoform Lb." evidence="14">
    <location>
        <begin position="1"/>
        <end position="28"/>
    </location>
</feature>
<feature type="sequence variant">
    <original>TTS</original>
    <variation>NTT</variation>
    <location>
        <begin position="726"/>
        <end position="728"/>
    </location>
</feature>
<feature type="sequence variant">
    <original>V</original>
    <variation>L</variation>
    <location>
        <position position="804"/>
    </location>
</feature>
<feature type="sequence variant">
    <original>G</original>
    <variation>S</variation>
    <location>
        <position position="859"/>
    </location>
</feature>
<feature type="sequence variant">
    <original>E</original>
    <variation>V</variation>
    <location>
        <position position="919"/>
    </location>
</feature>
<feature type="helix" evidence="15">
    <location>
        <begin position="229"/>
        <end position="232"/>
    </location>
</feature>
<feature type="helix" evidence="15">
    <location>
        <begin position="269"/>
        <end position="274"/>
    </location>
</feature>
<feature type="helix" evidence="16">
    <location>
        <begin position="549"/>
        <end position="552"/>
    </location>
</feature>
<feature type="helix" evidence="16">
    <location>
        <begin position="562"/>
        <end position="564"/>
    </location>
</feature>
<feature type="strand" evidence="16">
    <location>
        <begin position="572"/>
        <end position="574"/>
    </location>
</feature>
<feature type="strand" evidence="16">
    <location>
        <begin position="577"/>
        <end position="584"/>
    </location>
</feature>
<feature type="turn" evidence="16">
    <location>
        <begin position="589"/>
        <end position="592"/>
    </location>
</feature>
<feature type="helix" evidence="16">
    <location>
        <begin position="594"/>
        <end position="599"/>
    </location>
</feature>
<feature type="strand" evidence="16">
    <location>
        <begin position="602"/>
        <end position="607"/>
    </location>
</feature>
<feature type="strand" evidence="16">
    <location>
        <begin position="609"/>
        <end position="616"/>
    </location>
</feature>
<feature type="strand" evidence="16">
    <location>
        <begin position="622"/>
        <end position="630"/>
    </location>
</feature>
<feature type="strand" evidence="16">
    <location>
        <begin position="632"/>
        <end position="634"/>
    </location>
</feature>
<feature type="strand" evidence="16">
    <location>
        <begin position="638"/>
        <end position="640"/>
    </location>
</feature>
<feature type="helix" evidence="16">
    <location>
        <begin position="641"/>
        <end position="643"/>
    </location>
</feature>
<feature type="strand" evidence="16">
    <location>
        <begin position="646"/>
        <end position="653"/>
    </location>
</feature>
<feature type="strand" evidence="16">
    <location>
        <begin position="659"/>
        <end position="664"/>
    </location>
</feature>
<feature type="strand" evidence="16">
    <location>
        <begin position="669"/>
        <end position="676"/>
    </location>
</feature>
<feature type="strand" evidence="16">
    <location>
        <begin position="680"/>
        <end position="683"/>
    </location>
</feature>
<feature type="strand" evidence="16">
    <location>
        <begin position="688"/>
        <end position="698"/>
    </location>
</feature>
<feature type="strand" evidence="16">
    <location>
        <begin position="703"/>
        <end position="708"/>
    </location>
</feature>
<feature type="strand" evidence="16">
    <location>
        <begin position="715"/>
        <end position="719"/>
    </location>
</feature>
<sequence length="2336" mass="259985">MNTTDCFIALLYALREIKAFLLSRTQGKMELTLYNGEKKTFYSRPNNHDNCWLNTILQLFRYVDEPFFDWVYDSPENLTCEAIRQLEEITGLELHEGGPPALVIWNIKHLLHTGIGTASRPSEVCMVDGTDMCLADFHAGIFLKGQEHAVFACVTSDGWYAIDDEDFYPWTPDPSDVLVFVPYDQEPLNGEWKAKVQKRLKGAGQSSPATGSQNQSGNTGSIINNYYMQQYQNSMDTQLGDNAISGGSNEGSTDTTSTHTTNTQNNDWFSKLASSAFSGLFGALLADKKTEETTLLEDRILTTRNGHTTSTTQSSVGVTYGYSTQEDHVSGPNTSGLETRVVQAERFFKKYLFDWTPDKAFGHLEKLELPTDHKGVYGHLVDSFAYMRNGWDVEVSAVGNQFNGGCLLVAMVPEWKELTPREKYQLTLFPHQFISPRTNMTAHIVVPYLGVNRYDQYKKHKPWTLVVMVVSPLTTNTVSAGQIKVYANIAPTHVHVAGELPSKEGIVPVACSDGYGGLVTTDPKTADPVYGMVYNPPRTNYPGRFTNLLDVAEACPTFLCFDDGKPYVVTRTDEQRLLAKFDLSLAAKHMSNTYLSGIAQYYAQYSGTINLHFMFTGSTDSKARYMVAYVPPGVETPPDTPEKAAHCIHAEWDTGLNSKFTFSIPYVSAADYAYTASDVAETTNVQGWVCIYQITHGKAEQDTLVVSVSAGKDFELRLPIDPRSQTTSTGESADPVTTTVENYGGETQVQRRQHTDVTFIMDRFVKIQNLNPIHVIDLMQTHQHGLVGALLRAATYYFSDLEIVVRHDGNLTWVPNGAPEAALSNMGNPTAYPKAPFTRLALPYTAPHRVLATVYNGTGKYSAGGMGRRGDLEPLAARVAAQLPTSFNFGAIQATTIHELLVRMKRAELYCPRPLLAVEVSSQDRHKQKIIAPAKQLLNFDLLKLAGDVESNPGPFFFSDVRSNFSKLVETINQMQEDMSTKHGPDFNRLVSAFEELATGVKAIRTGLDEAKPWYKLIKLLSRLSCMAAVAARSKDPVLVAIMLADTGLEILDSTFVVKKISDSLSSLFHVPAPVFSFGAPILLAGLVKVASSFFRSTPEDLERAEKQLKARDINDIFAILKNGEWLVKLILAIRDWIKAWIASEEKFVTMTDLVPGILEKQRDLNDPSKYKEAKEWLDSARQACLKNGNVHIANLCKVVTPAPSKSRPEPVVVCLRGKSGQGKSFLANVLAQAISTHFTGRIDSVWYCPPDPDHFDGYNQQTVVVMDDLGQNPDGKDFKYFAQMVSTTGFIPPMASLEDKGKPFNSKVIITTTNLYSGFTPRTMVCPDALNRRFHFDIDVSAKDGYKVNNKLDITKALEDTHTNPVAMFKYDCALLNGMAVEMKRMQQDMFKPQPPLQNVYQLVQEVIERVELHEKVSSHQIFKQISIPSQKSVLYFLIEKGQHEAAIEFFEGLVHDSIKEELRPLIQQTSFVKRAFKRLKENFEIVALCLTLLANIVIMIRETRKRQQMVDDAVNEYIEKANITTDDKTLDEAEKNPLETSGVSIVGFRERTLPGHRASDDVNSEPARPVEEQPQAEGPYTGPLERQKPLKVKAKLPQQEGPYAGPMERQKPLKVKVKAPVVKEGPYEGPVKKPVALKVKAKNLIVTESGAPPTDLQKMVMGNTKPVELILDGKTVAICCATGVFGTAYLVPRHLFAEKYDKIMLDGRAMTDSDYRVFEFEIKVKGQDMLSDAALMVLHRGNRVRDITKHFRDTARMKKGTPVVGVINNADVGRLIFSGEALTYKDIVVCMDGDTMPGLFAYKAATKAGYCGGAVLAKDGADTFIVGTHSAGGNGVGYCSCVSRSMLLKMKAHIDPEPHHEGLIVDTRDVEERVHVMRKTKLAPTVAHGVFNPEFGPAALSNKDPRLNEGVVLDEVIFSKHKGDTKMTEEDKALFRRCAADYASRLHNVLGTANAPLSIYEAIKGVDGLDAMEPDTAPGLPWALQGKRRGTLIDFENGTVGPEVASALELMEKRQYKFTCQTFLKDEVRPMEKVRAGKTRIVDVLPVEHILYTRMMIGRFCAQMHSNNGPQIGSAVGCNPDVDWQRFGTHFAQYKNVWDVDYSAFDANHCSDAMNIMFEEVFRTEFGFHPNAEWILKTLVNTEHAYENKRITVEGGMPSGCSATSIINTILNNIYVLYALRRHYEGVELDTYTMISYGDDIVVASDYDLDFEALKPHFKSLGQTITPADKSDKGFVLGQSITDVTFLKRHFRMDYGTGFYKPVMASKTLEAILSFARRGTIQEKLISVAGLAVHSGPDEYRRLFEPFQGLFEIPSYRSLYLRWVNAVCGDAQSL</sequence>
<proteinExistence type="evidence at protein level"/>
<organism>
    <name type="scientific">Foot-and-mouth disease virus (isolate -/Azerbaijan/A22-550/1965 serotype A)</name>
    <name type="common">FMDV</name>
    <dbReference type="NCBI Taxonomy" id="73481"/>
    <lineage>
        <taxon>Viruses</taxon>
        <taxon>Riboviria</taxon>
        <taxon>Orthornavirae</taxon>
        <taxon>Pisuviricota</taxon>
        <taxon>Pisoniviricetes</taxon>
        <taxon>Picornavirales</taxon>
        <taxon>Picornaviridae</taxon>
        <taxon>Caphthovirinae</taxon>
        <taxon>Aphthovirus</taxon>
        <taxon>Foot-and-mouth disease virus</taxon>
    </lineage>
</organism>
<reference key="1">
    <citation type="submission" date="1993-08" db="EMBL/GenBank/DDBJ databases">
        <authorList>
            <person name="Sosnovtsev S.V."/>
            <person name="Onischenko A.M."/>
            <person name="Petrov N.A."/>
            <person name="Kalashnikova T.I."/>
            <person name="Mamaeva N.V."/>
            <person name="Drygin V.Y."/>
            <person name="Perevozchikova N.A."/>
            <person name="Vasilenko S.K."/>
        </authorList>
    </citation>
    <scope>NUCLEOTIDE SEQUENCE [GENOMIC RNA]</scope>
</reference>
<reference key="2">
    <citation type="journal article" date="1986" name="Bioorg. Khim.">
        <title>Primary structure of the DNA copy of the protein VP1 gene of the foot-and-mouth disease virus A22.</title>
        <authorList>
            <person name="Onishchenko A.M."/>
            <person name="Petrov N.A."/>
            <person name="Blinov V.M."/>
            <person name="Vassilenko S.K."/>
            <person name="Sandakhchiev L.S."/>
            <person name="Burdov A.N."/>
            <person name="Ivanyushchenkov V.N."/>
            <person name="Perevozchikova N.A."/>
        </authorList>
    </citation>
    <scope>NUCLEOTIDE SEQUENCE [GENOMIC RNA] OF 702-955</scope>
</reference>
<reference key="3">
    <citation type="journal article" date="1994" name="Structure">
        <title>The structure and antigenicity of a type C foot-and-mouth disease virus.</title>
        <authorList>
            <person name="Lea S."/>
            <person name="Hernandez J."/>
            <person name="Blakemore W."/>
            <person name="Brocchi E."/>
            <person name="Curry S."/>
            <person name="Domingo E."/>
            <person name="Fry E."/>
            <person name="Abu-Ghazaleh R."/>
            <person name="King A."/>
            <person name="Newman J."/>
        </authorList>
    </citation>
    <scope>X-RAY CRYSTALLOGRAPHY (3.50 ANGSTROMS) OF 202-286</scope>
</reference>
<name>POLG_FMDVZ</name>
<protein>
    <recommendedName>
        <fullName>Genome polyprotein</fullName>
    </recommendedName>
    <component>
        <recommendedName>
            <fullName>Leader protease</fullName>
            <shortName>Lpro</shortName>
            <ecNumber evidence="4">3.4.22.46</ecNumber>
        </recommendedName>
    </component>
    <component>
        <recommendedName>
            <fullName>Capsid protein VP0</fullName>
        </recommendedName>
        <alternativeName>
            <fullName>VP4-VP2</fullName>
        </alternativeName>
    </component>
    <component>
        <recommendedName>
            <fullName>Capsid protein VP4</fullName>
        </recommendedName>
        <alternativeName>
            <fullName>P1A</fullName>
        </alternativeName>
        <alternativeName>
            <fullName>Virion protein 4</fullName>
        </alternativeName>
    </component>
    <component>
        <recommendedName>
            <fullName>Capsid protein VP2</fullName>
        </recommendedName>
        <alternativeName>
            <fullName>P1B</fullName>
        </alternativeName>
        <alternativeName>
            <fullName>Virion protein 2</fullName>
        </alternativeName>
    </component>
    <component>
        <recommendedName>
            <fullName>Capsid protein VP3</fullName>
        </recommendedName>
        <alternativeName>
            <fullName>P1C</fullName>
        </alternativeName>
        <alternativeName>
            <fullName>Virion protein 3</fullName>
        </alternativeName>
    </component>
    <component>
        <recommendedName>
            <fullName>Capsid protein VP1</fullName>
        </recommendedName>
        <alternativeName>
            <fullName>P1D</fullName>
        </alternativeName>
        <alternativeName>
            <fullName>Virion protein 1</fullName>
        </alternativeName>
    </component>
    <component>
        <recommendedName>
            <fullName>Protein 2A</fullName>
            <shortName>P2A</shortName>
        </recommendedName>
        <alternativeName>
            <fullName>P52</fullName>
        </alternativeName>
    </component>
    <component>
        <recommendedName>
            <fullName>Protein 2B</fullName>
            <shortName>P2B</shortName>
        </recommendedName>
    </component>
    <component>
        <recommendedName>
            <fullName>Protein 2C</fullName>
            <shortName>P2C</shortName>
            <ecNumber evidence="4">3.6.1.15</ecNumber>
        </recommendedName>
    </component>
    <component>
        <recommendedName>
            <fullName>Protein 3A</fullName>
            <shortName>P3A</shortName>
        </recommendedName>
    </component>
    <component>
        <recommendedName>
            <fullName>Protein 3B-1</fullName>
            <shortName>P3B-1</shortName>
        </recommendedName>
        <alternativeName>
            <fullName>Genome-linked protein VPg1</fullName>
        </alternativeName>
    </component>
    <component>
        <recommendedName>
            <fullName>Protein 3B-2</fullName>
            <shortName>P3B-2</shortName>
        </recommendedName>
        <alternativeName>
            <fullName>Genome-linked protein VPg2</fullName>
        </alternativeName>
    </component>
    <component>
        <recommendedName>
            <fullName>Protein 3B-3</fullName>
            <shortName>P3B-3</shortName>
        </recommendedName>
        <alternativeName>
            <fullName>Genome-linked protein VPg3</fullName>
        </alternativeName>
    </component>
    <component>
        <recommendedName>
            <fullName>Protease 3C</fullName>
            <ecNumber>3.4.22.28</ecNumber>
        </recommendedName>
        <alternativeName>
            <fullName>Picornain 3C</fullName>
            <shortName>P3C</shortName>
        </alternativeName>
        <alternativeName>
            <fullName>Protease P20B</fullName>
        </alternativeName>
    </component>
    <component>
        <recommendedName>
            <fullName>RNA-directed RNA polymerase 3D-POL</fullName>
            <shortName>P3D-POL</shortName>
            <ecNumber evidence="4">2.7.7.48</ecNumber>
        </recommendedName>
        <alternativeName>
            <fullName>P56A</fullName>
        </alternativeName>
    </component>
</protein>
<organismHost>
    <name type="scientific">Bos taurus</name>
    <name type="common">Bovine</name>
    <dbReference type="NCBI Taxonomy" id="9913"/>
</organismHost>
<organismHost>
    <name type="scientific">Capra hircus</name>
    <name type="common">Goat</name>
    <dbReference type="NCBI Taxonomy" id="9925"/>
</organismHost>
<organismHost>
    <name type="scientific">Cervidae</name>
    <name type="common">Deer</name>
    <dbReference type="NCBI Taxonomy" id="9850"/>
</organismHost>
<organismHost>
    <name type="scientific">Erinaceidae</name>
    <name type="common">hedgehogs</name>
    <dbReference type="NCBI Taxonomy" id="9363"/>
</organismHost>
<organismHost>
    <name type="scientific">Loxodonta africana</name>
    <name type="common">African elephant</name>
    <dbReference type="NCBI Taxonomy" id="9785"/>
</organismHost>
<organismHost>
    <name type="scientific">Ovis aries</name>
    <name type="common">Sheep</name>
    <dbReference type="NCBI Taxonomy" id="9940"/>
</organismHost>
<organismHost>
    <name type="scientific">Rattus norvegicus</name>
    <name type="common">Rat</name>
    <dbReference type="NCBI Taxonomy" id="10116"/>
</organismHost>
<organismHost>
    <name type="scientific">Sus scrofa</name>
    <name type="common">Pig</name>
    <dbReference type="NCBI Taxonomy" id="9823"/>
</organismHost>